<evidence type="ECO:0000250" key="1"/>
<evidence type="ECO:0000255" key="2">
    <source>
        <dbReference type="HAMAP-Rule" id="MF_00100"/>
    </source>
</evidence>
<accession>B0BY61</accession>
<dbReference type="EMBL" id="CP000766">
    <property type="protein sequence ID" value="ABY72787.1"/>
    <property type="molecule type" value="Genomic_DNA"/>
</dbReference>
<dbReference type="RefSeq" id="WP_012150992.1">
    <property type="nucleotide sequence ID" value="NC_010263.3"/>
</dbReference>
<dbReference type="SMR" id="B0BY61"/>
<dbReference type="GeneID" id="79937525"/>
<dbReference type="KEGG" id="rrj:RrIowa_0967"/>
<dbReference type="eggNOG" id="COG0532">
    <property type="taxonomic scope" value="Bacteria"/>
</dbReference>
<dbReference type="HOGENOM" id="CLU_006301_10_2_5"/>
<dbReference type="Proteomes" id="UP000000796">
    <property type="component" value="Chromosome"/>
</dbReference>
<dbReference type="GO" id="GO:0005737">
    <property type="term" value="C:cytoplasm"/>
    <property type="evidence" value="ECO:0007669"/>
    <property type="project" value="UniProtKB-SubCell"/>
</dbReference>
<dbReference type="GO" id="GO:0005525">
    <property type="term" value="F:GTP binding"/>
    <property type="evidence" value="ECO:0007669"/>
    <property type="project" value="UniProtKB-KW"/>
</dbReference>
<dbReference type="GO" id="GO:0003924">
    <property type="term" value="F:GTPase activity"/>
    <property type="evidence" value="ECO:0007669"/>
    <property type="project" value="UniProtKB-UniRule"/>
</dbReference>
<dbReference type="GO" id="GO:0097216">
    <property type="term" value="F:guanosine tetraphosphate binding"/>
    <property type="evidence" value="ECO:0007669"/>
    <property type="project" value="UniProtKB-ARBA"/>
</dbReference>
<dbReference type="GO" id="GO:0003743">
    <property type="term" value="F:translation initiation factor activity"/>
    <property type="evidence" value="ECO:0007669"/>
    <property type="project" value="UniProtKB-UniRule"/>
</dbReference>
<dbReference type="CDD" id="cd01887">
    <property type="entry name" value="IF2_eIF5B"/>
    <property type="match status" value="1"/>
</dbReference>
<dbReference type="CDD" id="cd03702">
    <property type="entry name" value="IF2_mtIF2_II"/>
    <property type="match status" value="1"/>
</dbReference>
<dbReference type="CDD" id="cd03692">
    <property type="entry name" value="mtIF2_IVc"/>
    <property type="match status" value="1"/>
</dbReference>
<dbReference type="FunFam" id="2.40.30.10:FF:000008">
    <property type="entry name" value="Translation initiation factor IF-2"/>
    <property type="match status" value="1"/>
</dbReference>
<dbReference type="FunFam" id="2.40.30.10:FF:000054">
    <property type="entry name" value="Translation initiation factor IF-2"/>
    <property type="match status" value="1"/>
</dbReference>
<dbReference type="FunFam" id="3.40.50.10050:FF:000001">
    <property type="entry name" value="Translation initiation factor IF-2"/>
    <property type="match status" value="1"/>
</dbReference>
<dbReference type="FunFam" id="3.40.50.300:FF:000019">
    <property type="entry name" value="Translation initiation factor IF-2"/>
    <property type="match status" value="1"/>
</dbReference>
<dbReference type="Gene3D" id="3.40.50.300">
    <property type="entry name" value="P-loop containing nucleotide triphosphate hydrolases"/>
    <property type="match status" value="1"/>
</dbReference>
<dbReference type="Gene3D" id="2.40.30.10">
    <property type="entry name" value="Translation factors"/>
    <property type="match status" value="2"/>
</dbReference>
<dbReference type="Gene3D" id="3.40.50.10050">
    <property type="entry name" value="Translation initiation factor IF- 2, domain 3"/>
    <property type="match status" value="1"/>
</dbReference>
<dbReference type="HAMAP" id="MF_00100_B">
    <property type="entry name" value="IF_2_B"/>
    <property type="match status" value="1"/>
</dbReference>
<dbReference type="InterPro" id="IPR053905">
    <property type="entry name" value="EF-G-like_DII"/>
</dbReference>
<dbReference type="InterPro" id="IPR004161">
    <property type="entry name" value="EFTu-like_2"/>
</dbReference>
<dbReference type="InterPro" id="IPR044145">
    <property type="entry name" value="IF2_II"/>
</dbReference>
<dbReference type="InterPro" id="IPR006847">
    <property type="entry name" value="IF2_N"/>
</dbReference>
<dbReference type="InterPro" id="IPR027417">
    <property type="entry name" value="P-loop_NTPase"/>
</dbReference>
<dbReference type="InterPro" id="IPR005225">
    <property type="entry name" value="Small_GTP-bd"/>
</dbReference>
<dbReference type="InterPro" id="IPR000795">
    <property type="entry name" value="T_Tr_GTP-bd_dom"/>
</dbReference>
<dbReference type="InterPro" id="IPR000178">
    <property type="entry name" value="TF_IF2_bacterial-like"/>
</dbReference>
<dbReference type="InterPro" id="IPR015760">
    <property type="entry name" value="TIF_IF2"/>
</dbReference>
<dbReference type="InterPro" id="IPR023115">
    <property type="entry name" value="TIF_IF2_dom3"/>
</dbReference>
<dbReference type="InterPro" id="IPR036925">
    <property type="entry name" value="TIF_IF2_dom3_sf"/>
</dbReference>
<dbReference type="InterPro" id="IPR009000">
    <property type="entry name" value="Transl_B-barrel_sf"/>
</dbReference>
<dbReference type="NCBIfam" id="TIGR00487">
    <property type="entry name" value="IF-2"/>
    <property type="match status" value="1"/>
</dbReference>
<dbReference type="NCBIfam" id="TIGR00231">
    <property type="entry name" value="small_GTP"/>
    <property type="match status" value="1"/>
</dbReference>
<dbReference type="PANTHER" id="PTHR43381:SF5">
    <property type="entry name" value="TR-TYPE G DOMAIN-CONTAINING PROTEIN"/>
    <property type="match status" value="1"/>
</dbReference>
<dbReference type="PANTHER" id="PTHR43381">
    <property type="entry name" value="TRANSLATION INITIATION FACTOR IF-2-RELATED"/>
    <property type="match status" value="1"/>
</dbReference>
<dbReference type="Pfam" id="PF22042">
    <property type="entry name" value="EF-G_D2"/>
    <property type="match status" value="1"/>
</dbReference>
<dbReference type="Pfam" id="PF00009">
    <property type="entry name" value="GTP_EFTU"/>
    <property type="match status" value="1"/>
</dbReference>
<dbReference type="Pfam" id="PF03144">
    <property type="entry name" value="GTP_EFTU_D2"/>
    <property type="match status" value="1"/>
</dbReference>
<dbReference type="Pfam" id="PF11987">
    <property type="entry name" value="IF-2"/>
    <property type="match status" value="1"/>
</dbReference>
<dbReference type="Pfam" id="PF04760">
    <property type="entry name" value="IF2_N"/>
    <property type="match status" value="1"/>
</dbReference>
<dbReference type="SUPFAM" id="SSF52156">
    <property type="entry name" value="Initiation factor IF2/eIF5b, domain 3"/>
    <property type="match status" value="1"/>
</dbReference>
<dbReference type="SUPFAM" id="SSF52540">
    <property type="entry name" value="P-loop containing nucleoside triphosphate hydrolases"/>
    <property type="match status" value="1"/>
</dbReference>
<dbReference type="SUPFAM" id="SSF50447">
    <property type="entry name" value="Translation proteins"/>
    <property type="match status" value="2"/>
</dbReference>
<dbReference type="PROSITE" id="PS51722">
    <property type="entry name" value="G_TR_2"/>
    <property type="match status" value="1"/>
</dbReference>
<dbReference type="PROSITE" id="PS01176">
    <property type="entry name" value="IF2"/>
    <property type="match status" value="1"/>
</dbReference>
<organism>
    <name type="scientific">Rickettsia rickettsii (strain Iowa)</name>
    <dbReference type="NCBI Taxonomy" id="452659"/>
    <lineage>
        <taxon>Bacteria</taxon>
        <taxon>Pseudomonadati</taxon>
        <taxon>Pseudomonadota</taxon>
        <taxon>Alphaproteobacteria</taxon>
        <taxon>Rickettsiales</taxon>
        <taxon>Rickettsiaceae</taxon>
        <taxon>Rickettsieae</taxon>
        <taxon>Rickettsia</taxon>
        <taxon>spotted fever group</taxon>
    </lineage>
</organism>
<feature type="chain" id="PRO_1000075615" description="Translation initiation factor IF-2">
    <location>
        <begin position="1"/>
        <end position="831"/>
    </location>
</feature>
<feature type="domain" description="tr-type G">
    <location>
        <begin position="329"/>
        <end position="499"/>
    </location>
</feature>
<feature type="region of interest" description="G1" evidence="1">
    <location>
        <begin position="338"/>
        <end position="345"/>
    </location>
</feature>
<feature type="region of interest" description="G2" evidence="1">
    <location>
        <begin position="363"/>
        <end position="367"/>
    </location>
</feature>
<feature type="region of interest" description="G3" evidence="1">
    <location>
        <begin position="385"/>
        <end position="388"/>
    </location>
</feature>
<feature type="region of interest" description="G4" evidence="1">
    <location>
        <begin position="439"/>
        <end position="442"/>
    </location>
</feature>
<feature type="region of interest" description="G5" evidence="1">
    <location>
        <begin position="475"/>
        <end position="477"/>
    </location>
</feature>
<feature type="binding site" evidence="2">
    <location>
        <begin position="338"/>
        <end position="345"/>
    </location>
    <ligand>
        <name>GTP</name>
        <dbReference type="ChEBI" id="CHEBI:37565"/>
    </ligand>
</feature>
<feature type="binding site" evidence="2">
    <location>
        <begin position="385"/>
        <end position="389"/>
    </location>
    <ligand>
        <name>GTP</name>
        <dbReference type="ChEBI" id="CHEBI:37565"/>
    </ligand>
</feature>
<feature type="binding site" evidence="2">
    <location>
        <begin position="439"/>
        <end position="442"/>
    </location>
    <ligand>
        <name>GTP</name>
        <dbReference type="ChEBI" id="CHEBI:37565"/>
    </ligand>
</feature>
<name>IF2_RICRO</name>
<keyword id="KW-0963">Cytoplasm</keyword>
<keyword id="KW-0342">GTP-binding</keyword>
<keyword id="KW-0396">Initiation factor</keyword>
<keyword id="KW-0547">Nucleotide-binding</keyword>
<keyword id="KW-0648">Protein biosynthesis</keyword>
<reference key="1">
    <citation type="journal article" date="2008" name="Infect. Immun.">
        <title>Genomic comparison of virulent Rickettsia rickettsii Sheila Smith and avirulent Rickettsia rickettsii Iowa.</title>
        <authorList>
            <person name="Ellison D.W."/>
            <person name="Clark T.R."/>
            <person name="Sturdevant D.E."/>
            <person name="Virtaneva K."/>
            <person name="Porcella S.F."/>
            <person name="Hackstadt T."/>
        </authorList>
    </citation>
    <scope>NUCLEOTIDE SEQUENCE [LARGE SCALE GENOMIC DNA]</scope>
    <source>
        <strain>Iowa</strain>
    </source>
</reference>
<protein>
    <recommendedName>
        <fullName evidence="2">Translation initiation factor IF-2</fullName>
    </recommendedName>
</protein>
<gene>
    <name evidence="2" type="primary">infB</name>
    <name type="ordered locus">RrIowa_0967</name>
</gene>
<comment type="function">
    <text evidence="2">One of the essential components for the initiation of protein synthesis. Protects formylmethionyl-tRNA from spontaneous hydrolysis and promotes its binding to the 30S ribosomal subunits. Also involved in the hydrolysis of GTP during the formation of the 70S ribosomal complex.</text>
</comment>
<comment type="subcellular location">
    <subcellularLocation>
        <location evidence="2">Cytoplasm</location>
    </subcellularLocation>
</comment>
<comment type="similarity">
    <text evidence="2">Belongs to the TRAFAC class translation factor GTPase superfamily. Classic translation factor GTPase family. IF-2 subfamily.</text>
</comment>
<proteinExistence type="inferred from homology"/>
<sequence length="831" mass="91074">MTDNQEIKPKKLTLGNSKLSLNKSFDSLTGAQSFVNAKSKTLVEVRKSSTGSATTLSLNKERNSLDQTVIDANKEEFNRRLSILKKAAEQSQLNDPSKISTLSKLASINQSANSKIEPLETDKEVEQKQQNTEDNKVEVSAKIVQDDKDIPSQIPKKKEETFVKSPLVGMRTRYGIESEKELDKTADSKIIAPKIKLEEPKKIKKADLFNMLSDDESGSCRTRSLASIKRAREKEKRKLASQAPEKVYREVTIPEVIGVGDLANAMSERVADVIKELMKLGILANASQTIDADTAELVATNLGHTVKRVQESDVENVLISDDKVEDLRTRAPVVTVMGHVDHGKTSLLDALKSTDVAAGELGGITQHIGAYRVTLADGRAITFIDTPGHEAFSEMRSRGAKVTDIVIIVVAADDGIKTQTVEAINHAKAAGVPIIVAINKIDKPDIDIERVKNELYVHEIIGEEVGGDVMIIPISALKKINLDKLEEAILLIAEMQDLKANPFGSAAGVVIESKIEQGRGTLTTILVQRGTLRNSDIIIAGTAYGKVKKMTNDKGLEIVEATPSVPVEIQGLNEVPFAGDKFNIVQNEKQAKDIAEYRMRLAKEKKISIAPRSSLEDLFLKASGNSKIKELPLIIKGDVQGSVEAISGSLLKLPSDEIKLRILHSGVGPITESDVSLAHASSAIIVSFNVRAGANALTAAEKEKVDIRYYSIIYHLIDDIKAIMSGMLEPIVREQYIGSAEIRQIFNITKVGKIAGSYVTKGIIKKGAGVRLLRDNVVIHEGKLKTLKRFKDEVKEVREGYECGIAFENYEDIREGDTVEVFELIQEQRQL</sequence>